<dbReference type="EC" id="3.2.1.39"/>
<dbReference type="GO" id="GO:0042973">
    <property type="term" value="F:glucan endo-1,3-beta-D-glucosidase activity"/>
    <property type="evidence" value="ECO:0007669"/>
    <property type="project" value="UniProtKB-EC"/>
</dbReference>
<organism>
    <name type="scientific">Papiliotrema laurentii</name>
    <name type="common">Cryptococcus laurentii</name>
    <dbReference type="NCBI Taxonomy" id="5418"/>
    <lineage>
        <taxon>Eukaryota</taxon>
        <taxon>Fungi</taxon>
        <taxon>Dikarya</taxon>
        <taxon>Basidiomycota</taxon>
        <taxon>Agaricomycotina</taxon>
        <taxon>Tremellomycetes</taxon>
        <taxon>Tremellales</taxon>
        <taxon>Rhynchogastremaceae</taxon>
        <taxon>Papiliotrema</taxon>
    </lineage>
</organism>
<accession>P85238</accession>
<protein>
    <recommendedName>
        <fullName>Glucan endo-1,3-beta-glucosidase 2</fullName>
        <ecNumber>3.2.1.39</ecNumber>
    </recommendedName>
    <alternativeName>
        <fullName>(1-&gt;3)-beta-glucan endohydrolase 2</fullName>
        <shortName>(1-&gt;3)-beta-glucanase 2</shortName>
    </alternativeName>
</protein>
<name>E13B2_PAPLA</name>
<reference evidence="2" key="1">
    <citation type="submission" date="2007-07" db="UniProtKB">
        <authorList>
            <person name="Dutta D."/>
            <person name="Gachhui R."/>
        </authorList>
    </citation>
    <scope>PROTEIN SEQUENCE</scope>
    <source>
        <strain>RY1</strain>
    </source>
</reference>
<comment type="catalytic activity">
    <reaction>
        <text>Hydrolysis of (1-&gt;3)-beta-D-glucosidic linkages in (1-&gt;3)-beta-D-glucans.</text>
        <dbReference type="EC" id="3.2.1.39"/>
    </reaction>
</comment>
<evidence type="ECO:0000256" key="1">
    <source>
        <dbReference type="SAM" id="MobiDB-lite"/>
    </source>
</evidence>
<evidence type="ECO:0000305" key="2"/>
<feature type="chain" id="PRO_0000302130" description="Glucan endo-1,3-beta-glucosidase 2">
    <location>
        <begin position="1"/>
        <end position="21" status="greater than"/>
    </location>
</feature>
<feature type="region of interest" description="Disordered" evidence="1">
    <location>
        <begin position="1"/>
        <end position="21"/>
    </location>
</feature>
<feature type="non-terminal residue">
    <location>
        <position position="21"/>
    </location>
</feature>
<sequence>APGDLLWSDEFDGAAGSAPNP</sequence>
<keyword id="KW-0903">Direct protein sequencing</keyword>
<keyword id="KW-0326">Glycosidase</keyword>
<keyword id="KW-0378">Hydrolase</keyword>
<proteinExistence type="evidence at protein level"/>